<protein>
    <recommendedName>
        <fullName evidence="1">Dihydroxy-acid dehydratase</fullName>
        <shortName evidence="1">DAD</shortName>
        <ecNumber evidence="1">4.2.1.9</ecNumber>
    </recommendedName>
</protein>
<accession>A8A6M7</accession>
<reference key="1">
    <citation type="journal article" date="2008" name="J. Bacteriol.">
        <title>The pangenome structure of Escherichia coli: comparative genomic analysis of E. coli commensal and pathogenic isolates.</title>
        <authorList>
            <person name="Rasko D.A."/>
            <person name="Rosovitz M.J."/>
            <person name="Myers G.S.A."/>
            <person name="Mongodin E.F."/>
            <person name="Fricke W.F."/>
            <person name="Gajer P."/>
            <person name="Crabtree J."/>
            <person name="Sebaihia M."/>
            <person name="Thomson N.R."/>
            <person name="Chaudhuri R."/>
            <person name="Henderson I.R."/>
            <person name="Sperandio V."/>
            <person name="Ravel J."/>
        </authorList>
    </citation>
    <scope>NUCLEOTIDE SEQUENCE [LARGE SCALE GENOMIC DNA]</scope>
    <source>
        <strain>HS</strain>
    </source>
</reference>
<dbReference type="EC" id="4.2.1.9" evidence="1"/>
<dbReference type="EMBL" id="CP000802">
    <property type="protein sequence ID" value="ABV08181.1"/>
    <property type="molecule type" value="Genomic_DNA"/>
</dbReference>
<dbReference type="RefSeq" id="WP_001127419.1">
    <property type="nucleotide sequence ID" value="NC_009800.1"/>
</dbReference>
<dbReference type="SMR" id="A8A6M7"/>
<dbReference type="KEGG" id="ecx:EcHS_A3988"/>
<dbReference type="HOGENOM" id="CLU_014271_4_2_6"/>
<dbReference type="UniPathway" id="UPA00047">
    <property type="reaction ID" value="UER00057"/>
</dbReference>
<dbReference type="UniPathway" id="UPA00049">
    <property type="reaction ID" value="UER00061"/>
</dbReference>
<dbReference type="GO" id="GO:0005829">
    <property type="term" value="C:cytosol"/>
    <property type="evidence" value="ECO:0007669"/>
    <property type="project" value="TreeGrafter"/>
</dbReference>
<dbReference type="GO" id="GO:0051537">
    <property type="term" value="F:2 iron, 2 sulfur cluster binding"/>
    <property type="evidence" value="ECO:0007669"/>
    <property type="project" value="UniProtKB-UniRule"/>
</dbReference>
<dbReference type="GO" id="GO:0004160">
    <property type="term" value="F:dihydroxy-acid dehydratase activity"/>
    <property type="evidence" value="ECO:0007669"/>
    <property type="project" value="UniProtKB-UniRule"/>
</dbReference>
<dbReference type="GO" id="GO:0000287">
    <property type="term" value="F:magnesium ion binding"/>
    <property type="evidence" value="ECO:0007669"/>
    <property type="project" value="UniProtKB-UniRule"/>
</dbReference>
<dbReference type="GO" id="GO:0009097">
    <property type="term" value="P:isoleucine biosynthetic process"/>
    <property type="evidence" value="ECO:0007669"/>
    <property type="project" value="UniProtKB-UniRule"/>
</dbReference>
<dbReference type="GO" id="GO:0009099">
    <property type="term" value="P:L-valine biosynthetic process"/>
    <property type="evidence" value="ECO:0007669"/>
    <property type="project" value="UniProtKB-UniRule"/>
</dbReference>
<dbReference type="FunFam" id="3.50.30.80:FF:000001">
    <property type="entry name" value="Dihydroxy-acid dehydratase"/>
    <property type="match status" value="1"/>
</dbReference>
<dbReference type="Gene3D" id="3.50.30.80">
    <property type="entry name" value="IlvD/EDD C-terminal domain-like"/>
    <property type="match status" value="1"/>
</dbReference>
<dbReference type="HAMAP" id="MF_00012">
    <property type="entry name" value="IlvD"/>
    <property type="match status" value="1"/>
</dbReference>
<dbReference type="InterPro" id="IPR042096">
    <property type="entry name" value="Dihydro-acid_dehy_C"/>
</dbReference>
<dbReference type="InterPro" id="IPR004404">
    <property type="entry name" value="DihydroxyA_deHydtase"/>
</dbReference>
<dbReference type="InterPro" id="IPR020558">
    <property type="entry name" value="DiOHA_6PGluconate_deHydtase_CS"/>
</dbReference>
<dbReference type="InterPro" id="IPR056740">
    <property type="entry name" value="ILV_EDD_C"/>
</dbReference>
<dbReference type="InterPro" id="IPR000581">
    <property type="entry name" value="ILV_EDD_N"/>
</dbReference>
<dbReference type="InterPro" id="IPR037237">
    <property type="entry name" value="IlvD/EDD_N"/>
</dbReference>
<dbReference type="NCBIfam" id="TIGR00110">
    <property type="entry name" value="ilvD"/>
    <property type="match status" value="1"/>
</dbReference>
<dbReference type="NCBIfam" id="NF009103">
    <property type="entry name" value="PRK12448.1"/>
    <property type="match status" value="1"/>
</dbReference>
<dbReference type="PANTHER" id="PTHR43661">
    <property type="entry name" value="D-XYLONATE DEHYDRATASE"/>
    <property type="match status" value="1"/>
</dbReference>
<dbReference type="PANTHER" id="PTHR43661:SF3">
    <property type="entry name" value="D-XYLONATE DEHYDRATASE YAGF-RELATED"/>
    <property type="match status" value="1"/>
</dbReference>
<dbReference type="Pfam" id="PF24877">
    <property type="entry name" value="ILV_EDD_C"/>
    <property type="match status" value="1"/>
</dbReference>
<dbReference type="Pfam" id="PF00920">
    <property type="entry name" value="ILVD_EDD_N"/>
    <property type="match status" value="1"/>
</dbReference>
<dbReference type="SUPFAM" id="SSF143975">
    <property type="entry name" value="IlvD/EDD N-terminal domain-like"/>
    <property type="match status" value="1"/>
</dbReference>
<dbReference type="SUPFAM" id="SSF52016">
    <property type="entry name" value="LeuD/IlvD-like"/>
    <property type="match status" value="1"/>
</dbReference>
<dbReference type="PROSITE" id="PS00886">
    <property type="entry name" value="ILVD_EDD_1"/>
    <property type="match status" value="1"/>
</dbReference>
<dbReference type="PROSITE" id="PS00887">
    <property type="entry name" value="ILVD_EDD_2"/>
    <property type="match status" value="1"/>
</dbReference>
<feature type="chain" id="PRO_1000057097" description="Dihydroxy-acid dehydratase">
    <location>
        <begin position="1"/>
        <end position="616"/>
    </location>
</feature>
<feature type="active site" description="Proton acceptor" evidence="1">
    <location>
        <position position="517"/>
    </location>
</feature>
<feature type="binding site" evidence="1">
    <location>
        <position position="81"/>
    </location>
    <ligand>
        <name>Mg(2+)</name>
        <dbReference type="ChEBI" id="CHEBI:18420"/>
    </ligand>
</feature>
<feature type="binding site" evidence="1">
    <location>
        <position position="122"/>
    </location>
    <ligand>
        <name>[2Fe-2S] cluster</name>
        <dbReference type="ChEBI" id="CHEBI:190135"/>
    </ligand>
</feature>
<feature type="binding site" evidence="1">
    <location>
        <position position="123"/>
    </location>
    <ligand>
        <name>Mg(2+)</name>
        <dbReference type="ChEBI" id="CHEBI:18420"/>
    </ligand>
</feature>
<feature type="binding site" description="via carbamate group" evidence="1">
    <location>
        <position position="124"/>
    </location>
    <ligand>
        <name>Mg(2+)</name>
        <dbReference type="ChEBI" id="CHEBI:18420"/>
    </ligand>
</feature>
<feature type="binding site" evidence="1">
    <location>
        <position position="195"/>
    </location>
    <ligand>
        <name>[2Fe-2S] cluster</name>
        <dbReference type="ChEBI" id="CHEBI:190135"/>
    </ligand>
</feature>
<feature type="binding site" evidence="1">
    <location>
        <position position="491"/>
    </location>
    <ligand>
        <name>Mg(2+)</name>
        <dbReference type="ChEBI" id="CHEBI:18420"/>
    </ligand>
</feature>
<feature type="modified residue" description="N6-carboxylysine" evidence="1">
    <location>
        <position position="124"/>
    </location>
</feature>
<comment type="function">
    <text evidence="1">Functions in the biosynthesis of branched-chain amino acids. Catalyzes the dehydration of (2R,3R)-2,3-dihydroxy-3-methylpentanoate (2,3-dihydroxy-3-methylvalerate) into 2-oxo-3-methylpentanoate (2-oxo-3-methylvalerate) and of (2R)-2,3-dihydroxy-3-methylbutanoate (2,3-dihydroxyisovalerate) into 2-oxo-3-methylbutanoate (2-oxoisovalerate), the penultimate precursor to L-isoleucine and L-valine, respectively.</text>
</comment>
<comment type="catalytic activity">
    <reaction evidence="1">
        <text>(2R)-2,3-dihydroxy-3-methylbutanoate = 3-methyl-2-oxobutanoate + H2O</text>
        <dbReference type="Rhea" id="RHEA:24809"/>
        <dbReference type="ChEBI" id="CHEBI:11851"/>
        <dbReference type="ChEBI" id="CHEBI:15377"/>
        <dbReference type="ChEBI" id="CHEBI:49072"/>
        <dbReference type="EC" id="4.2.1.9"/>
    </reaction>
    <physiologicalReaction direction="left-to-right" evidence="1">
        <dbReference type="Rhea" id="RHEA:24810"/>
    </physiologicalReaction>
</comment>
<comment type="catalytic activity">
    <reaction evidence="1">
        <text>(2R,3R)-2,3-dihydroxy-3-methylpentanoate = (S)-3-methyl-2-oxopentanoate + H2O</text>
        <dbReference type="Rhea" id="RHEA:27694"/>
        <dbReference type="ChEBI" id="CHEBI:15377"/>
        <dbReference type="ChEBI" id="CHEBI:35146"/>
        <dbReference type="ChEBI" id="CHEBI:49258"/>
        <dbReference type="EC" id="4.2.1.9"/>
    </reaction>
    <physiologicalReaction direction="left-to-right" evidence="1">
        <dbReference type="Rhea" id="RHEA:27695"/>
    </physiologicalReaction>
</comment>
<comment type="cofactor">
    <cofactor evidence="1">
        <name>[2Fe-2S] cluster</name>
        <dbReference type="ChEBI" id="CHEBI:190135"/>
    </cofactor>
    <text evidence="1">Binds 1 [2Fe-2S] cluster per subunit. This cluster acts as a Lewis acid cofactor.</text>
</comment>
<comment type="cofactor">
    <cofactor evidence="1">
        <name>Mg(2+)</name>
        <dbReference type="ChEBI" id="CHEBI:18420"/>
    </cofactor>
</comment>
<comment type="pathway">
    <text evidence="1">Amino-acid biosynthesis; L-isoleucine biosynthesis; L-isoleucine from 2-oxobutanoate: step 3/4.</text>
</comment>
<comment type="pathway">
    <text evidence="1">Amino-acid biosynthesis; L-valine biosynthesis; L-valine from pyruvate: step 3/4.</text>
</comment>
<comment type="subunit">
    <text evidence="1">Homodimer.</text>
</comment>
<comment type="similarity">
    <text evidence="1">Belongs to the IlvD/Edd family.</text>
</comment>
<sequence>MPKYRSATTTHGRNMAGARALWRATGMTDADFGKPIIAVVNSFTQFVPGHVHLRDLGKLVAEQIEAAGGVAKEFNTIAVDDGIAMGHGGMLYSLPSRELIADSVEYMVNAHCADAMVCISNCDKITPGMLMASLRLNIPVIFVSGGPMEAGKTKLSDRIIKLDLVDAMIQGADPKVSDSQSDQVERSACPTCGSCSGMFTANSMNCLTEALGLSQPGNGSLLATHADRKQLFLNAGKRIVELTKRYYEQNDESALPRNIASKAAFENAMTLDIAMGGSTNTVLHLLAAAQEAEIDFTMSDIDKLSRKVPQLCKVAPSTQKYHMEDVHRAGGVIGILGELDRAGLLNRDVKNVLGLTLPQTLEQYDVMLTQDDAVKNMFRAGPAGIRTTQAFSQDCRWDSLDDDRANGCIRSLEHAYSKDGGLAVLYGNFAENGCIVKTAGVDDSILKFTGPAKVYESQDDAVEAILGGKVVAGDVVVIRYEGPKGGPGMQEMLYPTSFLKSMGLGKACALITDGRFSGGTSGLSIGHVSPEAASGGSIGLIEDGDLIAIDIPNRGIQLQVSDAELAARREAQEARGDKAWTPKNRERQVSFALRAYASLATSADKGAVRDKSKLGG</sequence>
<name>ILVD_ECOHS</name>
<gene>
    <name evidence="1" type="primary">ilvD</name>
    <name type="ordered locus">EcHS_A3988</name>
</gene>
<organism>
    <name type="scientific">Escherichia coli O9:H4 (strain HS)</name>
    <dbReference type="NCBI Taxonomy" id="331112"/>
    <lineage>
        <taxon>Bacteria</taxon>
        <taxon>Pseudomonadati</taxon>
        <taxon>Pseudomonadota</taxon>
        <taxon>Gammaproteobacteria</taxon>
        <taxon>Enterobacterales</taxon>
        <taxon>Enterobacteriaceae</taxon>
        <taxon>Escherichia</taxon>
    </lineage>
</organism>
<proteinExistence type="inferred from homology"/>
<keyword id="KW-0001">2Fe-2S</keyword>
<keyword id="KW-0028">Amino-acid biosynthesis</keyword>
<keyword id="KW-0100">Branched-chain amino acid biosynthesis</keyword>
<keyword id="KW-0408">Iron</keyword>
<keyword id="KW-0411">Iron-sulfur</keyword>
<keyword id="KW-0456">Lyase</keyword>
<keyword id="KW-0460">Magnesium</keyword>
<keyword id="KW-0479">Metal-binding</keyword>
<evidence type="ECO:0000255" key="1">
    <source>
        <dbReference type="HAMAP-Rule" id="MF_00012"/>
    </source>
</evidence>